<dbReference type="GO" id="GO:0005576">
    <property type="term" value="C:extracellular region"/>
    <property type="evidence" value="ECO:0007669"/>
    <property type="project" value="UniProtKB-SubCell"/>
</dbReference>
<dbReference type="GO" id="GO:0090729">
    <property type="term" value="F:toxin activity"/>
    <property type="evidence" value="ECO:0007669"/>
    <property type="project" value="UniProtKB-KW"/>
</dbReference>
<evidence type="ECO:0000250" key="1"/>
<evidence type="ECO:0000256" key="2">
    <source>
        <dbReference type="SAM" id="MobiDB-lite"/>
    </source>
</evidence>
<evidence type="ECO:0000305" key="3"/>
<evidence type="ECO:0000305" key="4">
    <source>
    </source>
</evidence>
<accession>P0DL19</accession>
<protein>
    <recommendedName>
        <fullName>Cysteine-rich venom protein notescatin</fullName>
        <shortName>CRVP</shortName>
    </recommendedName>
    <alternativeName>
        <fullName>Notescatin-a</fullName>
    </alternativeName>
    <alternativeName>
        <fullName>Notescatin-b</fullName>
    </alternativeName>
</protein>
<sequence>SNKKDYQKEIVDKHNALRRSVK</sequence>
<keyword id="KW-0903">Direct protein sequencing</keyword>
<keyword id="KW-1015">Disulfide bond</keyword>
<keyword id="KW-0964">Secreted</keyword>
<keyword id="KW-0800">Toxin</keyword>
<comment type="subcellular location">
    <subcellularLocation>
        <location>Secreted</location>
    </subcellularLocation>
</comment>
<comment type="tissue specificity">
    <text>Expressed by the venom gland.</text>
</comment>
<comment type="PTM">
    <text evidence="1">Contains 8 disulfide bonds.</text>
</comment>
<comment type="similarity">
    <text evidence="3">Belongs to the CRISP family.</text>
</comment>
<comment type="caution">
    <text evidence="4">Two CRISP proteins (notescatin-a and -b) are secreted in the venom of N.scutatus. Since the N-terminal amino-acid sequence of these two proteins is identical, only one UniProtKB entry has been created (PubMed:19106157).</text>
</comment>
<feature type="chain" id="PRO_0000422149" description="Cysteine-rich venom protein notescatin">
    <location>
        <begin position="1"/>
        <end position="22" status="greater than"/>
    </location>
</feature>
<feature type="region of interest" description="Disordered" evidence="2">
    <location>
        <begin position="1"/>
        <end position="22"/>
    </location>
</feature>
<feature type="compositionally biased region" description="Basic and acidic residues" evidence="2">
    <location>
        <begin position="1"/>
        <end position="15"/>
    </location>
</feature>
<feature type="non-terminal residue">
    <location>
        <position position="22"/>
    </location>
</feature>
<name>CRVPA_NOTSC</name>
<reference key="1">
    <citation type="journal article" date="2009" name="J. Biochem.">
        <title>Structural divergence of cysteine-rich secretory proteins in snake venoms.</title>
        <authorList>
            <person name="Matsunaga Y."/>
            <person name="Yamazaki Y."/>
            <person name="Hyodo F."/>
            <person name="Sugiyama Y."/>
            <person name="Nozaki M."/>
            <person name="Morita T."/>
        </authorList>
    </citation>
    <scope>PROTEIN SEQUENCE</scope>
    <source>
        <tissue>Venom</tissue>
    </source>
</reference>
<proteinExistence type="evidence at protein level"/>
<organism>
    <name type="scientific">Notechis scutatus scutatus</name>
    <name type="common">Mainland tiger snake</name>
    <name type="synonym">Common tiger snake</name>
    <dbReference type="NCBI Taxonomy" id="70142"/>
    <lineage>
        <taxon>Eukaryota</taxon>
        <taxon>Metazoa</taxon>
        <taxon>Chordata</taxon>
        <taxon>Craniata</taxon>
        <taxon>Vertebrata</taxon>
        <taxon>Euteleostomi</taxon>
        <taxon>Lepidosauria</taxon>
        <taxon>Squamata</taxon>
        <taxon>Bifurcata</taxon>
        <taxon>Unidentata</taxon>
        <taxon>Episquamata</taxon>
        <taxon>Toxicofera</taxon>
        <taxon>Serpentes</taxon>
        <taxon>Colubroidea</taxon>
        <taxon>Elapidae</taxon>
        <taxon>Hydrophiinae</taxon>
        <taxon>Notechis</taxon>
    </lineage>
</organism>